<accession>B7LR08</accession>
<name>YHBQ_ESCF3</name>
<comment type="similarity">
    <text evidence="1">Belongs to the UPF0213 family.</text>
</comment>
<gene>
    <name evidence="1" type="primary">yhbQ</name>
    <name type="ordered locus">EFER_3118</name>
</gene>
<evidence type="ECO:0000255" key="1">
    <source>
        <dbReference type="HAMAP-Rule" id="MF_01029"/>
    </source>
</evidence>
<feature type="chain" id="PRO_1000135750" description="UPF0213 protein YhbQ">
    <location>
        <begin position="1"/>
        <end position="100"/>
    </location>
</feature>
<feature type="domain" description="GIY-YIG" evidence="1">
    <location>
        <begin position="2"/>
        <end position="77"/>
    </location>
</feature>
<sequence length="100" mass="11258">MTPWFLYLIRTADNKLYTGITTDVERRYQQHQSGKGAKALRGKGELTLAFSAPVGDRSLALRAEYRVKQLTKRQKERLVAEGSGFAELISSLQTPEIKSD</sequence>
<proteinExistence type="inferred from homology"/>
<dbReference type="EMBL" id="CU928158">
    <property type="protein sequence ID" value="CAQ90611.1"/>
    <property type="molecule type" value="Genomic_DNA"/>
</dbReference>
<dbReference type="RefSeq" id="WP_000189323.1">
    <property type="nucleotide sequence ID" value="NC_011740.1"/>
</dbReference>
<dbReference type="SMR" id="B7LR08"/>
<dbReference type="GeneID" id="75060265"/>
<dbReference type="KEGG" id="efe:EFER_3118"/>
<dbReference type="HOGENOM" id="CLU_135650_0_1_6"/>
<dbReference type="OrthoDB" id="9797095at2"/>
<dbReference type="Proteomes" id="UP000000745">
    <property type="component" value="Chromosome"/>
</dbReference>
<dbReference type="CDD" id="cd10456">
    <property type="entry name" value="GIY-YIG_UPF0213"/>
    <property type="match status" value="1"/>
</dbReference>
<dbReference type="FunFam" id="3.40.1440.10:FF:000002">
    <property type="entry name" value="UPF0213 protein YhbQ"/>
    <property type="match status" value="1"/>
</dbReference>
<dbReference type="Gene3D" id="3.40.1440.10">
    <property type="entry name" value="GIY-YIG endonuclease"/>
    <property type="match status" value="1"/>
</dbReference>
<dbReference type="HAMAP" id="MF_01029">
    <property type="entry name" value="UPF0213"/>
    <property type="match status" value="1"/>
</dbReference>
<dbReference type="InterPro" id="IPR000305">
    <property type="entry name" value="GIY-YIG_endonuc"/>
</dbReference>
<dbReference type="InterPro" id="IPR035901">
    <property type="entry name" value="GIY-YIG_endonuc_sf"/>
</dbReference>
<dbReference type="InterPro" id="IPR050190">
    <property type="entry name" value="UPF0213_domain"/>
</dbReference>
<dbReference type="InterPro" id="IPR022992">
    <property type="entry name" value="UPF0213_GIY-YIG_endonuc"/>
</dbReference>
<dbReference type="PANTHER" id="PTHR34477">
    <property type="entry name" value="UPF0213 PROTEIN YHBQ"/>
    <property type="match status" value="1"/>
</dbReference>
<dbReference type="PANTHER" id="PTHR34477:SF1">
    <property type="entry name" value="UPF0213 PROTEIN YHBQ"/>
    <property type="match status" value="1"/>
</dbReference>
<dbReference type="Pfam" id="PF01541">
    <property type="entry name" value="GIY-YIG"/>
    <property type="match status" value="1"/>
</dbReference>
<dbReference type="SMART" id="SM00465">
    <property type="entry name" value="GIYc"/>
    <property type="match status" value="1"/>
</dbReference>
<dbReference type="SUPFAM" id="SSF82771">
    <property type="entry name" value="GIY-YIG endonuclease"/>
    <property type="match status" value="1"/>
</dbReference>
<dbReference type="PROSITE" id="PS50164">
    <property type="entry name" value="GIY_YIG"/>
    <property type="match status" value="1"/>
</dbReference>
<protein>
    <recommendedName>
        <fullName evidence="1">UPF0213 protein YhbQ</fullName>
    </recommendedName>
</protein>
<reference key="1">
    <citation type="journal article" date="2009" name="PLoS Genet.">
        <title>Organised genome dynamics in the Escherichia coli species results in highly diverse adaptive paths.</title>
        <authorList>
            <person name="Touchon M."/>
            <person name="Hoede C."/>
            <person name="Tenaillon O."/>
            <person name="Barbe V."/>
            <person name="Baeriswyl S."/>
            <person name="Bidet P."/>
            <person name="Bingen E."/>
            <person name="Bonacorsi S."/>
            <person name="Bouchier C."/>
            <person name="Bouvet O."/>
            <person name="Calteau A."/>
            <person name="Chiapello H."/>
            <person name="Clermont O."/>
            <person name="Cruveiller S."/>
            <person name="Danchin A."/>
            <person name="Diard M."/>
            <person name="Dossat C."/>
            <person name="Karoui M.E."/>
            <person name="Frapy E."/>
            <person name="Garry L."/>
            <person name="Ghigo J.M."/>
            <person name="Gilles A.M."/>
            <person name="Johnson J."/>
            <person name="Le Bouguenec C."/>
            <person name="Lescat M."/>
            <person name="Mangenot S."/>
            <person name="Martinez-Jehanne V."/>
            <person name="Matic I."/>
            <person name="Nassif X."/>
            <person name="Oztas S."/>
            <person name="Petit M.A."/>
            <person name="Pichon C."/>
            <person name="Rouy Z."/>
            <person name="Ruf C.S."/>
            <person name="Schneider D."/>
            <person name="Tourret J."/>
            <person name="Vacherie B."/>
            <person name="Vallenet D."/>
            <person name="Medigue C."/>
            <person name="Rocha E.P.C."/>
            <person name="Denamur E."/>
        </authorList>
    </citation>
    <scope>NUCLEOTIDE SEQUENCE [LARGE SCALE GENOMIC DNA]</scope>
    <source>
        <strain>ATCC 35469 / DSM 13698 / BCRC 15582 / CCUG 18766 / IAM 14443 / JCM 21226 / LMG 7866 / NBRC 102419 / NCTC 12128 / CDC 0568-73</strain>
    </source>
</reference>
<organism>
    <name type="scientific">Escherichia fergusonii (strain ATCC 35469 / DSM 13698 / CCUG 18766 / IAM 14443 / JCM 21226 / LMG 7866 / NBRC 102419 / NCTC 12128 / CDC 0568-73)</name>
    <dbReference type="NCBI Taxonomy" id="585054"/>
    <lineage>
        <taxon>Bacteria</taxon>
        <taxon>Pseudomonadati</taxon>
        <taxon>Pseudomonadota</taxon>
        <taxon>Gammaproteobacteria</taxon>
        <taxon>Enterobacterales</taxon>
        <taxon>Enterobacteriaceae</taxon>
        <taxon>Escherichia</taxon>
    </lineage>
</organism>